<organism>
    <name type="scientific">Moorella thermoacetica (strain ATCC 39073 / JCM 9320)</name>
    <dbReference type="NCBI Taxonomy" id="264732"/>
    <lineage>
        <taxon>Bacteria</taxon>
        <taxon>Bacillati</taxon>
        <taxon>Bacillota</taxon>
        <taxon>Clostridia</taxon>
        <taxon>Moorellales</taxon>
        <taxon>Moorellaceae</taxon>
        <taxon>Moorella</taxon>
    </lineage>
</organism>
<name>RF1_MOOTA</name>
<accession>Q2RFW0</accession>
<gene>
    <name evidence="1" type="primary">prfA</name>
    <name type="ordered locus">Moth_2397</name>
</gene>
<reference key="1">
    <citation type="journal article" date="2008" name="Environ. Microbiol.">
        <title>The complete genome sequence of Moorella thermoacetica (f. Clostridium thermoaceticum).</title>
        <authorList>
            <person name="Pierce E."/>
            <person name="Xie G."/>
            <person name="Barabote R.D."/>
            <person name="Saunders E."/>
            <person name="Han C.S."/>
            <person name="Detter J.C."/>
            <person name="Richardson P."/>
            <person name="Brettin T.S."/>
            <person name="Das A."/>
            <person name="Ljungdahl L.G."/>
            <person name="Ragsdale S.W."/>
        </authorList>
    </citation>
    <scope>NUCLEOTIDE SEQUENCE [LARGE SCALE GENOMIC DNA]</scope>
    <source>
        <strain>ATCC 39073 / JCM 9320</strain>
    </source>
</reference>
<sequence length="356" mass="40573">MLEKLEQIEARYEELGRLMGDPEVIADPEQLQKHARAHAALEDIVTTFRRYRQVSNELAEDKAMLEEEKDREFQELLKAEIERLTGEQERLEQELKILLLPKDPNDEKDIIMEIRAGAGGEEAALFAGDLFRMYQRYAEKKRWRTEIISSHPTELGGFKEIIFQVEGQGVYSRLKFESGVHRVQRIPTTESGGRIHTSTATVAVLPEAEEVDVEIKPEDLRVDIFCSSGPGGQSVNTTYSAVRITHLPTGLVVSCQDEKSQLKNKEKAMRVLRARLLDMARAEREGELAEERRSQVGSGDRSERIRTYNFPQNRVTDHRIGLTLHHLDQVLAGELDEIIDALVTTDQAERLKNMEA</sequence>
<dbReference type="EMBL" id="CP000232">
    <property type="protein sequence ID" value="ABC20679.1"/>
    <property type="molecule type" value="Genomic_DNA"/>
</dbReference>
<dbReference type="RefSeq" id="YP_431222.1">
    <property type="nucleotide sequence ID" value="NC_007644.1"/>
</dbReference>
<dbReference type="SMR" id="Q2RFW0"/>
<dbReference type="STRING" id="264732.Moth_2397"/>
<dbReference type="EnsemblBacteria" id="ABC20679">
    <property type="protein sequence ID" value="ABC20679"/>
    <property type="gene ID" value="Moth_2397"/>
</dbReference>
<dbReference type="KEGG" id="mta:Moth_2397"/>
<dbReference type="PATRIC" id="fig|264732.11.peg.2610"/>
<dbReference type="eggNOG" id="COG0216">
    <property type="taxonomic scope" value="Bacteria"/>
</dbReference>
<dbReference type="HOGENOM" id="CLU_036856_0_1_9"/>
<dbReference type="OrthoDB" id="9806673at2"/>
<dbReference type="GO" id="GO:0005737">
    <property type="term" value="C:cytoplasm"/>
    <property type="evidence" value="ECO:0007669"/>
    <property type="project" value="UniProtKB-SubCell"/>
</dbReference>
<dbReference type="GO" id="GO:0016149">
    <property type="term" value="F:translation release factor activity, codon specific"/>
    <property type="evidence" value="ECO:0007669"/>
    <property type="project" value="UniProtKB-UniRule"/>
</dbReference>
<dbReference type="FunFam" id="3.30.160.20:FF:000004">
    <property type="entry name" value="Peptide chain release factor 1"/>
    <property type="match status" value="1"/>
</dbReference>
<dbReference type="FunFam" id="3.30.70.1660:FF:000002">
    <property type="entry name" value="Peptide chain release factor 1"/>
    <property type="match status" value="1"/>
</dbReference>
<dbReference type="FunFam" id="3.30.70.1660:FF:000004">
    <property type="entry name" value="Peptide chain release factor 1"/>
    <property type="match status" value="1"/>
</dbReference>
<dbReference type="Gene3D" id="3.30.160.20">
    <property type="match status" value="1"/>
</dbReference>
<dbReference type="Gene3D" id="3.30.70.1660">
    <property type="match status" value="1"/>
</dbReference>
<dbReference type="Gene3D" id="6.10.140.1950">
    <property type="match status" value="1"/>
</dbReference>
<dbReference type="HAMAP" id="MF_00093">
    <property type="entry name" value="Rel_fac_1"/>
    <property type="match status" value="1"/>
</dbReference>
<dbReference type="InterPro" id="IPR005139">
    <property type="entry name" value="PCRF"/>
</dbReference>
<dbReference type="InterPro" id="IPR000352">
    <property type="entry name" value="Pep_chain_release_fac_I"/>
</dbReference>
<dbReference type="InterPro" id="IPR045853">
    <property type="entry name" value="Pep_chain_release_fac_I_sf"/>
</dbReference>
<dbReference type="InterPro" id="IPR050057">
    <property type="entry name" value="Prokaryotic/Mito_RF"/>
</dbReference>
<dbReference type="InterPro" id="IPR004373">
    <property type="entry name" value="RF-1"/>
</dbReference>
<dbReference type="NCBIfam" id="TIGR00019">
    <property type="entry name" value="prfA"/>
    <property type="match status" value="1"/>
</dbReference>
<dbReference type="NCBIfam" id="NF001859">
    <property type="entry name" value="PRK00591.1"/>
    <property type="match status" value="1"/>
</dbReference>
<dbReference type="PANTHER" id="PTHR43804">
    <property type="entry name" value="LD18447P"/>
    <property type="match status" value="1"/>
</dbReference>
<dbReference type="PANTHER" id="PTHR43804:SF7">
    <property type="entry name" value="LD18447P"/>
    <property type="match status" value="1"/>
</dbReference>
<dbReference type="Pfam" id="PF03462">
    <property type="entry name" value="PCRF"/>
    <property type="match status" value="1"/>
</dbReference>
<dbReference type="Pfam" id="PF00472">
    <property type="entry name" value="RF-1"/>
    <property type="match status" value="1"/>
</dbReference>
<dbReference type="SMART" id="SM00937">
    <property type="entry name" value="PCRF"/>
    <property type="match status" value="1"/>
</dbReference>
<dbReference type="SUPFAM" id="SSF75620">
    <property type="entry name" value="Release factor"/>
    <property type="match status" value="1"/>
</dbReference>
<evidence type="ECO:0000255" key="1">
    <source>
        <dbReference type="HAMAP-Rule" id="MF_00093"/>
    </source>
</evidence>
<evidence type="ECO:0000256" key="2">
    <source>
        <dbReference type="SAM" id="MobiDB-lite"/>
    </source>
</evidence>
<feature type="chain" id="PRO_0000263297" description="Peptide chain release factor 1">
    <location>
        <begin position="1"/>
        <end position="356"/>
    </location>
</feature>
<feature type="region of interest" description="Disordered" evidence="2">
    <location>
        <begin position="284"/>
        <end position="310"/>
    </location>
</feature>
<feature type="compositionally biased region" description="Basic and acidic residues" evidence="2">
    <location>
        <begin position="284"/>
        <end position="306"/>
    </location>
</feature>
<feature type="modified residue" description="N5-methylglutamine" evidence="1">
    <location>
        <position position="233"/>
    </location>
</feature>
<proteinExistence type="inferred from homology"/>
<comment type="function">
    <text evidence="1">Peptide chain release factor 1 directs the termination of translation in response to the peptide chain termination codons UAG and UAA.</text>
</comment>
<comment type="subcellular location">
    <subcellularLocation>
        <location evidence="1">Cytoplasm</location>
    </subcellularLocation>
</comment>
<comment type="PTM">
    <text evidence="1">Methylated by PrmC. Methylation increases the termination efficiency of RF1.</text>
</comment>
<comment type="similarity">
    <text evidence="1">Belongs to the prokaryotic/mitochondrial release factor family.</text>
</comment>
<keyword id="KW-0963">Cytoplasm</keyword>
<keyword id="KW-0488">Methylation</keyword>
<keyword id="KW-0648">Protein biosynthesis</keyword>
<protein>
    <recommendedName>
        <fullName evidence="1">Peptide chain release factor 1</fullName>
        <shortName evidence="1">RF-1</shortName>
    </recommendedName>
</protein>